<sequence>MAKGQSLQDPFLNALRRERVPVSIYLVNGIKLQGQVESFDQFVILLKNTVSQMVYKHAISTVVPARPFNVSAHHSSPAPTPAGGFNGQNDETSE</sequence>
<evidence type="ECO:0000255" key="1">
    <source>
        <dbReference type="HAMAP-Rule" id="MF_00436"/>
    </source>
</evidence>
<evidence type="ECO:0000255" key="2">
    <source>
        <dbReference type="PROSITE-ProRule" id="PRU01346"/>
    </source>
</evidence>
<evidence type="ECO:0000256" key="3">
    <source>
        <dbReference type="SAM" id="MobiDB-lite"/>
    </source>
</evidence>
<keyword id="KW-1185">Reference proteome</keyword>
<keyword id="KW-0694">RNA-binding</keyword>
<keyword id="KW-0346">Stress response</keyword>
<name>HFQ_SHEWM</name>
<organism>
    <name type="scientific">Shewanella woodyi (strain ATCC 51908 / MS32)</name>
    <dbReference type="NCBI Taxonomy" id="392500"/>
    <lineage>
        <taxon>Bacteria</taxon>
        <taxon>Pseudomonadati</taxon>
        <taxon>Pseudomonadota</taxon>
        <taxon>Gammaproteobacteria</taxon>
        <taxon>Alteromonadales</taxon>
        <taxon>Shewanellaceae</taxon>
        <taxon>Shewanella</taxon>
    </lineage>
</organism>
<gene>
    <name evidence="1" type="primary">hfq</name>
    <name type="ordered locus">Swoo_4170</name>
</gene>
<reference key="1">
    <citation type="submission" date="2008-02" db="EMBL/GenBank/DDBJ databases">
        <title>Complete sequence of Shewanella woodyi ATCC 51908.</title>
        <authorList>
            <consortium name="US DOE Joint Genome Institute"/>
            <person name="Copeland A."/>
            <person name="Lucas S."/>
            <person name="Lapidus A."/>
            <person name="Glavina del Rio T."/>
            <person name="Dalin E."/>
            <person name="Tice H."/>
            <person name="Bruce D."/>
            <person name="Goodwin L."/>
            <person name="Pitluck S."/>
            <person name="Sims D."/>
            <person name="Brettin T."/>
            <person name="Detter J.C."/>
            <person name="Han C."/>
            <person name="Kuske C.R."/>
            <person name="Schmutz J."/>
            <person name="Larimer F."/>
            <person name="Land M."/>
            <person name="Hauser L."/>
            <person name="Kyrpides N."/>
            <person name="Lykidis A."/>
            <person name="Zhao J.-S."/>
            <person name="Richardson P."/>
        </authorList>
    </citation>
    <scope>NUCLEOTIDE SEQUENCE [LARGE SCALE GENOMIC DNA]</scope>
    <source>
        <strain>ATCC 51908 / MS32</strain>
    </source>
</reference>
<accession>B1KHU8</accession>
<proteinExistence type="inferred from homology"/>
<protein>
    <recommendedName>
        <fullName evidence="1">RNA-binding protein Hfq</fullName>
    </recommendedName>
</protein>
<feature type="chain" id="PRO_1000190360" description="RNA-binding protein Hfq">
    <location>
        <begin position="1"/>
        <end position="94"/>
    </location>
</feature>
<feature type="domain" description="Sm" evidence="2">
    <location>
        <begin position="9"/>
        <end position="68"/>
    </location>
</feature>
<feature type="region of interest" description="Disordered" evidence="3">
    <location>
        <begin position="70"/>
        <end position="94"/>
    </location>
</feature>
<dbReference type="EMBL" id="CP000961">
    <property type="protein sequence ID" value="ACA88426.1"/>
    <property type="molecule type" value="Genomic_DNA"/>
</dbReference>
<dbReference type="RefSeq" id="WP_012326755.1">
    <property type="nucleotide sequence ID" value="NC_010506.1"/>
</dbReference>
<dbReference type="SMR" id="B1KHU8"/>
<dbReference type="STRING" id="392500.Swoo_4170"/>
<dbReference type="KEGG" id="swd:Swoo_4170"/>
<dbReference type="eggNOG" id="COG1923">
    <property type="taxonomic scope" value="Bacteria"/>
</dbReference>
<dbReference type="HOGENOM" id="CLU_113688_2_2_6"/>
<dbReference type="Proteomes" id="UP000002168">
    <property type="component" value="Chromosome"/>
</dbReference>
<dbReference type="GO" id="GO:0005829">
    <property type="term" value="C:cytosol"/>
    <property type="evidence" value="ECO:0007669"/>
    <property type="project" value="TreeGrafter"/>
</dbReference>
<dbReference type="GO" id="GO:0003723">
    <property type="term" value="F:RNA binding"/>
    <property type="evidence" value="ECO:0007669"/>
    <property type="project" value="UniProtKB-UniRule"/>
</dbReference>
<dbReference type="GO" id="GO:0006355">
    <property type="term" value="P:regulation of DNA-templated transcription"/>
    <property type="evidence" value="ECO:0007669"/>
    <property type="project" value="InterPro"/>
</dbReference>
<dbReference type="GO" id="GO:0043487">
    <property type="term" value="P:regulation of RNA stability"/>
    <property type="evidence" value="ECO:0007669"/>
    <property type="project" value="TreeGrafter"/>
</dbReference>
<dbReference type="GO" id="GO:0045974">
    <property type="term" value="P:regulation of translation, ncRNA-mediated"/>
    <property type="evidence" value="ECO:0007669"/>
    <property type="project" value="TreeGrafter"/>
</dbReference>
<dbReference type="CDD" id="cd01716">
    <property type="entry name" value="Hfq"/>
    <property type="match status" value="1"/>
</dbReference>
<dbReference type="FunFam" id="2.30.30.100:FF:000001">
    <property type="entry name" value="RNA-binding protein Hfq"/>
    <property type="match status" value="1"/>
</dbReference>
<dbReference type="Gene3D" id="2.30.30.100">
    <property type="match status" value="1"/>
</dbReference>
<dbReference type="HAMAP" id="MF_00436">
    <property type="entry name" value="Hfq"/>
    <property type="match status" value="1"/>
</dbReference>
<dbReference type="InterPro" id="IPR005001">
    <property type="entry name" value="Hfq"/>
</dbReference>
<dbReference type="InterPro" id="IPR010920">
    <property type="entry name" value="LSM_dom_sf"/>
</dbReference>
<dbReference type="InterPro" id="IPR047575">
    <property type="entry name" value="Sm"/>
</dbReference>
<dbReference type="NCBIfam" id="TIGR02383">
    <property type="entry name" value="Hfq"/>
    <property type="match status" value="1"/>
</dbReference>
<dbReference type="NCBIfam" id="NF001602">
    <property type="entry name" value="PRK00395.1"/>
    <property type="match status" value="1"/>
</dbReference>
<dbReference type="PANTHER" id="PTHR34772">
    <property type="entry name" value="RNA-BINDING PROTEIN HFQ"/>
    <property type="match status" value="1"/>
</dbReference>
<dbReference type="PANTHER" id="PTHR34772:SF1">
    <property type="entry name" value="RNA-BINDING PROTEIN HFQ"/>
    <property type="match status" value="1"/>
</dbReference>
<dbReference type="Pfam" id="PF17209">
    <property type="entry name" value="Hfq"/>
    <property type="match status" value="1"/>
</dbReference>
<dbReference type="SUPFAM" id="SSF50182">
    <property type="entry name" value="Sm-like ribonucleoproteins"/>
    <property type="match status" value="1"/>
</dbReference>
<dbReference type="PROSITE" id="PS52002">
    <property type="entry name" value="SM"/>
    <property type="match status" value="1"/>
</dbReference>
<comment type="function">
    <text evidence="1">RNA chaperone that binds small regulatory RNA (sRNAs) and mRNAs to facilitate mRNA translational regulation in response to envelope stress, environmental stress and changes in metabolite concentrations. Also binds with high specificity to tRNAs.</text>
</comment>
<comment type="subunit">
    <text evidence="1">Homohexamer.</text>
</comment>
<comment type="similarity">
    <text evidence="1">Belongs to the Hfq family.</text>
</comment>